<gene>
    <name evidence="4" type="primary">sepH</name>
    <name type="ORF">ATEG_05555</name>
</gene>
<reference evidence="10" key="1">
    <citation type="submission" date="2005-09" db="EMBL/GenBank/DDBJ databases">
        <title>Annotation of the Aspergillus terreus NIH2624 genome.</title>
        <authorList>
            <person name="Birren B.W."/>
            <person name="Lander E.S."/>
            <person name="Galagan J.E."/>
            <person name="Nusbaum C."/>
            <person name="Devon K."/>
            <person name="Henn M."/>
            <person name="Ma L.-J."/>
            <person name="Jaffe D.B."/>
            <person name="Butler J."/>
            <person name="Alvarez P."/>
            <person name="Gnerre S."/>
            <person name="Grabherr M."/>
            <person name="Kleber M."/>
            <person name="Mauceli E.W."/>
            <person name="Brockman W."/>
            <person name="Rounsley S."/>
            <person name="Young S.K."/>
            <person name="LaButti K."/>
            <person name="Pushparaj V."/>
            <person name="DeCaprio D."/>
            <person name="Crawford M."/>
            <person name="Koehrsen M."/>
            <person name="Engels R."/>
            <person name="Montgomery P."/>
            <person name="Pearson M."/>
            <person name="Howarth C."/>
            <person name="Larson L."/>
            <person name="Luoma S."/>
            <person name="White J."/>
            <person name="Alvarado L."/>
            <person name="Kodira C.D."/>
            <person name="Zeng Q."/>
            <person name="Oleary S."/>
            <person name="Yandava C."/>
            <person name="Denning D.W."/>
            <person name="Nierman W.C."/>
            <person name="Milne T."/>
            <person name="Madden K."/>
        </authorList>
    </citation>
    <scope>NUCLEOTIDE SEQUENCE [LARGE SCALE GENOMIC DNA]</scope>
    <source>
        <strain>NIH 2624 / FGSC A1156</strain>
    </source>
</reference>
<proteinExistence type="inferred from homology"/>
<name>SEPH_ASPTN</name>
<comment type="function">
    <text evidence="4">Required for early events during cytokinesis including localization of cytoskeletal components to the cytokinetic ring.</text>
</comment>
<comment type="catalytic activity">
    <reaction evidence="2">
        <text>L-seryl-[protein] + ATP = O-phospho-L-seryl-[protein] + ADP + H(+)</text>
        <dbReference type="Rhea" id="RHEA:17989"/>
        <dbReference type="Rhea" id="RHEA-COMP:9863"/>
        <dbReference type="Rhea" id="RHEA-COMP:11604"/>
        <dbReference type="ChEBI" id="CHEBI:15378"/>
        <dbReference type="ChEBI" id="CHEBI:29999"/>
        <dbReference type="ChEBI" id="CHEBI:30616"/>
        <dbReference type="ChEBI" id="CHEBI:83421"/>
        <dbReference type="ChEBI" id="CHEBI:456216"/>
        <dbReference type="EC" id="2.7.11.1"/>
    </reaction>
</comment>
<comment type="catalytic activity">
    <reaction evidence="2">
        <text>L-threonyl-[protein] + ATP = O-phospho-L-threonyl-[protein] + ADP + H(+)</text>
        <dbReference type="Rhea" id="RHEA:46608"/>
        <dbReference type="Rhea" id="RHEA-COMP:11060"/>
        <dbReference type="Rhea" id="RHEA-COMP:11605"/>
        <dbReference type="ChEBI" id="CHEBI:15378"/>
        <dbReference type="ChEBI" id="CHEBI:30013"/>
        <dbReference type="ChEBI" id="CHEBI:30616"/>
        <dbReference type="ChEBI" id="CHEBI:61977"/>
        <dbReference type="ChEBI" id="CHEBI:456216"/>
        <dbReference type="EC" id="2.7.11.1"/>
    </reaction>
</comment>
<comment type="cofactor">
    <cofactor evidence="2">
        <name>Mg(2+)</name>
        <dbReference type="ChEBI" id="CHEBI:18420"/>
    </cofactor>
</comment>
<comment type="similarity">
    <text evidence="6">Belongs to the protein kinase superfamily. Ser/Thr protein kinase family. CDC7 subfamily.</text>
</comment>
<comment type="sequence caution" evidence="9">
    <conflict type="erroneous gene model prediction">
        <sequence resource="EMBL-CDS" id="EAU34624"/>
    </conflict>
</comment>
<feature type="chain" id="PRO_0000396518" description="Cytokinesis protein sepH">
    <location>
        <begin position="1"/>
        <end position="1342"/>
    </location>
</feature>
<feature type="domain" description="Protein kinase" evidence="6">
    <location>
        <begin position="61"/>
        <end position="308"/>
    </location>
</feature>
<feature type="region of interest" description="Disordered" evidence="8">
    <location>
        <begin position="1"/>
        <end position="47"/>
    </location>
</feature>
<feature type="region of interest" description="Disordered" evidence="8">
    <location>
        <begin position="336"/>
        <end position="396"/>
    </location>
</feature>
<feature type="region of interest" description="Disordered" evidence="8">
    <location>
        <begin position="441"/>
        <end position="486"/>
    </location>
</feature>
<feature type="region of interest" description="Disordered" evidence="8">
    <location>
        <begin position="552"/>
        <end position="591"/>
    </location>
</feature>
<feature type="region of interest" description="Disordered" evidence="8">
    <location>
        <begin position="1201"/>
        <end position="1342"/>
    </location>
</feature>
<feature type="coiled-coil region" evidence="5">
    <location>
        <begin position="658"/>
        <end position="695"/>
    </location>
</feature>
<feature type="compositionally biased region" description="Low complexity" evidence="8">
    <location>
        <begin position="1"/>
        <end position="10"/>
    </location>
</feature>
<feature type="compositionally biased region" description="Pro residues" evidence="8">
    <location>
        <begin position="11"/>
        <end position="22"/>
    </location>
</feature>
<feature type="compositionally biased region" description="Basic and acidic residues" evidence="8">
    <location>
        <begin position="36"/>
        <end position="47"/>
    </location>
</feature>
<feature type="compositionally biased region" description="Polar residues" evidence="8">
    <location>
        <begin position="369"/>
        <end position="379"/>
    </location>
</feature>
<feature type="compositionally biased region" description="Basic residues" evidence="8">
    <location>
        <begin position="1207"/>
        <end position="1217"/>
    </location>
</feature>
<feature type="compositionally biased region" description="Polar residues" evidence="8">
    <location>
        <begin position="1218"/>
        <end position="1244"/>
    </location>
</feature>
<feature type="compositionally biased region" description="Polar residues" evidence="8">
    <location>
        <begin position="1273"/>
        <end position="1290"/>
    </location>
</feature>
<feature type="compositionally biased region" description="Low complexity" evidence="8">
    <location>
        <begin position="1315"/>
        <end position="1324"/>
    </location>
</feature>
<feature type="active site" description="Proton acceptor" evidence="1 6 7">
    <location>
        <position position="180"/>
    </location>
</feature>
<feature type="binding site" evidence="1 6">
    <location>
        <begin position="67"/>
        <end position="75"/>
    </location>
    <ligand>
        <name>ATP</name>
        <dbReference type="ChEBI" id="CHEBI:30616"/>
    </ligand>
</feature>
<feature type="binding site" evidence="1 6">
    <location>
        <position position="90"/>
    </location>
    <ligand>
        <name>ATP</name>
        <dbReference type="ChEBI" id="CHEBI:30616"/>
    </ligand>
</feature>
<organism>
    <name type="scientific">Aspergillus terreus (strain NIH 2624 / FGSC A1156)</name>
    <dbReference type="NCBI Taxonomy" id="341663"/>
    <lineage>
        <taxon>Eukaryota</taxon>
        <taxon>Fungi</taxon>
        <taxon>Dikarya</taxon>
        <taxon>Ascomycota</taxon>
        <taxon>Pezizomycotina</taxon>
        <taxon>Eurotiomycetes</taxon>
        <taxon>Eurotiomycetidae</taxon>
        <taxon>Eurotiales</taxon>
        <taxon>Aspergillaceae</taxon>
        <taxon>Aspergillus</taxon>
        <taxon>Aspergillus subgen. Circumdati</taxon>
    </lineage>
</organism>
<dbReference type="EC" id="2.7.11.1"/>
<dbReference type="EMBL" id="CH476600">
    <property type="protein sequence ID" value="EAU34624.1"/>
    <property type="status" value="ALT_SEQ"/>
    <property type="molecule type" value="Genomic_DNA"/>
</dbReference>
<dbReference type="RefSeq" id="XP_001214733.1">
    <property type="nucleotide sequence ID" value="XM_001214733.1"/>
</dbReference>
<dbReference type="SMR" id="Q0CL79"/>
<dbReference type="STRING" id="341663.Q0CL79"/>
<dbReference type="GeneID" id="4320592"/>
<dbReference type="eggNOG" id="KOG0198">
    <property type="taxonomic scope" value="Eukaryota"/>
</dbReference>
<dbReference type="OrthoDB" id="8693905at2759"/>
<dbReference type="Proteomes" id="UP000007963">
    <property type="component" value="Unassembled WGS sequence"/>
</dbReference>
<dbReference type="GO" id="GO:0005737">
    <property type="term" value="C:cytoplasm"/>
    <property type="evidence" value="ECO:0007669"/>
    <property type="project" value="TreeGrafter"/>
</dbReference>
<dbReference type="GO" id="GO:0005524">
    <property type="term" value="F:ATP binding"/>
    <property type="evidence" value="ECO:0007669"/>
    <property type="project" value="UniProtKB-KW"/>
</dbReference>
<dbReference type="GO" id="GO:0046872">
    <property type="term" value="F:metal ion binding"/>
    <property type="evidence" value="ECO:0007669"/>
    <property type="project" value="UniProtKB-KW"/>
</dbReference>
<dbReference type="GO" id="GO:0106310">
    <property type="term" value="F:protein serine kinase activity"/>
    <property type="evidence" value="ECO:0007669"/>
    <property type="project" value="RHEA"/>
</dbReference>
<dbReference type="GO" id="GO:0004674">
    <property type="term" value="F:protein serine/threonine kinase activity"/>
    <property type="evidence" value="ECO:0007669"/>
    <property type="project" value="UniProtKB-KW"/>
</dbReference>
<dbReference type="GO" id="GO:0051301">
    <property type="term" value="P:cell division"/>
    <property type="evidence" value="ECO:0007669"/>
    <property type="project" value="UniProtKB-KW"/>
</dbReference>
<dbReference type="CDD" id="cd06627">
    <property type="entry name" value="STKc_Cdc7_like"/>
    <property type="match status" value="1"/>
</dbReference>
<dbReference type="FunFam" id="3.30.200.20:FF:000042">
    <property type="entry name" value="Aurora kinase A"/>
    <property type="match status" value="1"/>
</dbReference>
<dbReference type="FunFam" id="1.25.10.10:FF:000176">
    <property type="entry name" value="Cell division control protein"/>
    <property type="match status" value="1"/>
</dbReference>
<dbReference type="FunFam" id="1.25.10.10:FF:000212">
    <property type="entry name" value="Cell division control protein"/>
    <property type="match status" value="1"/>
</dbReference>
<dbReference type="FunFam" id="1.10.510.10:FF:000246">
    <property type="entry name" value="Putative Serine-threonine kinase SepH"/>
    <property type="match status" value="1"/>
</dbReference>
<dbReference type="Gene3D" id="1.25.10.10">
    <property type="entry name" value="Leucine-rich Repeat Variant"/>
    <property type="match status" value="2"/>
</dbReference>
<dbReference type="Gene3D" id="1.10.510.10">
    <property type="entry name" value="Transferase(Phosphotransferase) domain 1"/>
    <property type="match status" value="1"/>
</dbReference>
<dbReference type="InterPro" id="IPR011989">
    <property type="entry name" value="ARM-like"/>
</dbReference>
<dbReference type="InterPro" id="IPR016024">
    <property type="entry name" value="ARM-type_fold"/>
</dbReference>
<dbReference type="InterPro" id="IPR011009">
    <property type="entry name" value="Kinase-like_dom_sf"/>
</dbReference>
<dbReference type="InterPro" id="IPR000719">
    <property type="entry name" value="Prot_kinase_dom"/>
</dbReference>
<dbReference type="InterPro" id="IPR017441">
    <property type="entry name" value="Protein_kinase_ATP_BS"/>
</dbReference>
<dbReference type="InterPro" id="IPR008271">
    <property type="entry name" value="Ser/Thr_kinase_AS"/>
</dbReference>
<dbReference type="InterPro" id="IPR053235">
    <property type="entry name" value="Ser_Thr_kinase"/>
</dbReference>
<dbReference type="PANTHER" id="PTHR24361">
    <property type="entry name" value="MITOGEN-ACTIVATED KINASE KINASE KINASE"/>
    <property type="match status" value="1"/>
</dbReference>
<dbReference type="PANTHER" id="PTHR24361:SF433">
    <property type="entry name" value="PROTEIN KINASE DOMAIN-CONTAINING PROTEIN"/>
    <property type="match status" value="1"/>
</dbReference>
<dbReference type="Pfam" id="PF00069">
    <property type="entry name" value="Pkinase"/>
    <property type="match status" value="1"/>
</dbReference>
<dbReference type="SMART" id="SM00220">
    <property type="entry name" value="S_TKc"/>
    <property type="match status" value="1"/>
</dbReference>
<dbReference type="SUPFAM" id="SSF48371">
    <property type="entry name" value="ARM repeat"/>
    <property type="match status" value="2"/>
</dbReference>
<dbReference type="SUPFAM" id="SSF56112">
    <property type="entry name" value="Protein kinase-like (PK-like)"/>
    <property type="match status" value="1"/>
</dbReference>
<dbReference type="PROSITE" id="PS00107">
    <property type="entry name" value="PROTEIN_KINASE_ATP"/>
    <property type="match status" value="1"/>
</dbReference>
<dbReference type="PROSITE" id="PS50011">
    <property type="entry name" value="PROTEIN_KINASE_DOM"/>
    <property type="match status" value="1"/>
</dbReference>
<dbReference type="PROSITE" id="PS00108">
    <property type="entry name" value="PROTEIN_KINASE_ST"/>
    <property type="match status" value="1"/>
</dbReference>
<evidence type="ECO:0000250" key="1">
    <source>
        <dbReference type="UniProtKB" id="P28523"/>
    </source>
</evidence>
<evidence type="ECO:0000250" key="2">
    <source>
        <dbReference type="UniProtKB" id="P41892"/>
    </source>
</evidence>
<evidence type="ECO:0000250" key="3">
    <source>
        <dbReference type="UniProtKB" id="P78621"/>
    </source>
</evidence>
<evidence type="ECO:0000250" key="4">
    <source>
        <dbReference type="UniProtKB" id="Q5B4Z3"/>
    </source>
</evidence>
<evidence type="ECO:0000255" key="5"/>
<evidence type="ECO:0000255" key="6">
    <source>
        <dbReference type="PROSITE-ProRule" id="PRU00159"/>
    </source>
</evidence>
<evidence type="ECO:0000255" key="7">
    <source>
        <dbReference type="PROSITE-ProRule" id="PRU10027"/>
    </source>
</evidence>
<evidence type="ECO:0000256" key="8">
    <source>
        <dbReference type="SAM" id="MobiDB-lite"/>
    </source>
</evidence>
<evidence type="ECO:0000305" key="9"/>
<evidence type="ECO:0000312" key="10">
    <source>
        <dbReference type="EMBL" id="EAU34624.1"/>
    </source>
</evidence>
<accession>Q0CL79</accession>
<protein>
    <recommendedName>
        <fullName evidence="3">Cytokinesis protein sepH</fullName>
        <ecNumber>2.7.11.1</ecNumber>
    </recommendedName>
    <alternativeName>
        <fullName evidence="3">Serine/threonine-protein kinase sepH</fullName>
    </alternativeName>
</protein>
<keyword id="KW-0067">ATP-binding</keyword>
<keyword id="KW-0131">Cell cycle</keyword>
<keyword id="KW-0132">Cell division</keyword>
<keyword id="KW-0175">Coiled coil</keyword>
<keyword id="KW-0418">Kinase</keyword>
<keyword id="KW-0460">Magnesium</keyword>
<keyword id="KW-0479">Metal-binding</keyword>
<keyword id="KW-0547">Nucleotide-binding</keyword>
<keyword id="KW-1185">Reference proteome</keyword>
<keyword id="KW-0723">Serine/threonine-protein kinase</keyword>
<keyword id="KW-0808">Transferase</keyword>
<sequence length="1342" mass="149981">MVSRSSEGAEGPPPSAPKPPNTPAKSRLSRLGSSPSKREDKSRDDRMIKSSAKDVAELKDYQLGDCLGKGAFGSVYRALNWNTGETVAVKQIKLADLPKSELRLEIDLLKNLDHPNIVKYQGFVKSAETLNIILEYCENGSLHSIAKNFGRFPENLVGLYMSQVLHGLLYLHEQGVIHRDIKGANILTTKEGLVKLADFGVASRTTGLSESSVVGTPYWMAPEVIELSGATTASDIWSLGCTVIELLEGKPPYYNMQPMPALFRIVNDDHPPLPQGASPAVKDFLMQCFQKDPNLRVSARKLLKHPWIVNARRSDSVVPKSSTEYEEAVRSVQEWNEALRSPSAGTLRRPVKHDQSPIPVPPTRHTPTKDTLPSPVSRNVTDRFRSPVPTEEEEDNWDDDFATAISPSALQLPHLRPHDNFGGMLSSEKLKAFASLDGTMIKSDDSFGDSDSSFGSSRRSDEPDPLETIRPYPLKQPTAESTQLQELPRSQINKTSMASMHHVPILTQNPTPPTKQPRPASYYKENSIEDYSDLIQANEDVLDSKLGAFQEADENVDPFESSPSKEAIRNRASAEDVMGQQPQLRKQISVKRHRSAVEIQRFAENERDEDFSDLLGTDEVMIDQPESDGSSDQSTLMLNSKLSNNSWLGDQDDEDDPFAQLEEGLDEMDLEANIARDKHARLRNQVEGLVSSLKTSQDEDVLAEISEQLLTVFCDFPETKNIIISAHGMLPILEILDMCRRRDITSCLLKIVNAIIYNDYEIQENLCFVGGIPIINEFASKKYPREIRLEAAAFVQQMYQTSTLTLQMFVSAGGLNVLVEFLEDDYEDERDLVLIGVNGIWSVFELQGSTPKNDFCRILSRNSVLDPLSLVLSRVLDEDGELAEIVEGRIANIFFIFSQAENHVKEMVAERTVLHRVLKELRRMTPAHQITMLKFIKNLSMLSTTLDSLQNSNAIDVLTDLLRATMKRPHFREVSNQILNTIYNMCRLNKSRQEDAALNGIVPLLQKIVKTERPLKEFALPILCDMAHSGKVGRRELWRNKGLAFYISLLSDPYWQVTALDAIFTWLQEETAKVEEHLLDHRPDRPSFTDSIVRCLTISKANAFENLLEPLQKLLRLSPPIASTLARPDLFTRIGQKLHHSKAAVRLNLLRIISSICDSSEEQGGLLAKYGLLDAIRELEHDPAILVRDMAGKLIQSNEKSEAYGMGKRKPMVRRRSTSATPPNLLANQSAPSTPQMNRTSQSKAYYEGKEGSRHPRNALSGSALALRPGSRDGSTPSLTAGLNGSTGASRTRLPRGVSNRMSHVDLLSEEDSARPSSSLSRRQSVLHRRRRQTQADADWTP</sequence>